<organism>
    <name type="scientific">Salmonella typhimurium (strain LT2 / SGSC1412 / ATCC 700720)</name>
    <dbReference type="NCBI Taxonomy" id="99287"/>
    <lineage>
        <taxon>Bacteria</taxon>
        <taxon>Pseudomonadati</taxon>
        <taxon>Pseudomonadota</taxon>
        <taxon>Gammaproteobacteria</taxon>
        <taxon>Enterobacterales</taxon>
        <taxon>Enterobacteriaceae</taxon>
        <taxon>Salmonella</taxon>
    </lineage>
</organism>
<feature type="chain" id="PRO_0000201287" description="Cardiolipin synthase B">
    <location>
        <begin position="1"/>
        <end position="413"/>
    </location>
</feature>
<feature type="domain" description="PLD phosphodiesterase 1" evidence="1">
    <location>
        <begin position="108"/>
        <end position="135"/>
    </location>
</feature>
<feature type="domain" description="PLD phosphodiesterase 2" evidence="1">
    <location>
        <begin position="285"/>
        <end position="312"/>
    </location>
</feature>
<feature type="region of interest" description="Disordered" evidence="2">
    <location>
        <begin position="388"/>
        <end position="413"/>
    </location>
</feature>
<feature type="active site" evidence="1">
    <location>
        <position position="113"/>
    </location>
</feature>
<feature type="active site" evidence="1">
    <location>
        <position position="115"/>
    </location>
</feature>
<feature type="active site" evidence="1">
    <location>
        <position position="120"/>
    </location>
</feature>
<feature type="active site" evidence="1">
    <location>
        <position position="290"/>
    </location>
</feature>
<feature type="active site" evidence="1">
    <location>
        <position position="292"/>
    </location>
</feature>
<feature type="active site" evidence="1">
    <location>
        <position position="297"/>
    </location>
</feature>
<proteinExistence type="inferred from homology"/>
<accession>Q8ZQP4</accession>
<protein>
    <recommendedName>
        <fullName evidence="1">Cardiolipin synthase B</fullName>
        <shortName evidence="1">CL synthase</shortName>
        <ecNumber evidence="1">2.7.8.-</ecNumber>
    </recommendedName>
</protein>
<reference key="1">
    <citation type="journal article" date="2001" name="Nature">
        <title>Complete genome sequence of Salmonella enterica serovar Typhimurium LT2.</title>
        <authorList>
            <person name="McClelland M."/>
            <person name="Sanderson K.E."/>
            <person name="Spieth J."/>
            <person name="Clifton S.W."/>
            <person name="Latreille P."/>
            <person name="Courtney L."/>
            <person name="Porwollik S."/>
            <person name="Ali J."/>
            <person name="Dante M."/>
            <person name="Du F."/>
            <person name="Hou S."/>
            <person name="Layman D."/>
            <person name="Leonard S."/>
            <person name="Nguyen C."/>
            <person name="Scott K."/>
            <person name="Holmes A."/>
            <person name="Grewal N."/>
            <person name="Mulvaney E."/>
            <person name="Ryan E."/>
            <person name="Sun H."/>
            <person name="Florea L."/>
            <person name="Miller W."/>
            <person name="Stoneking T."/>
            <person name="Nhan M."/>
            <person name="Waterston R."/>
            <person name="Wilson R.K."/>
        </authorList>
    </citation>
    <scope>NUCLEOTIDE SEQUENCE [LARGE SCALE GENOMIC DNA]</scope>
    <source>
        <strain>LT2 / SGSC1412 / ATCC 700720</strain>
    </source>
</reference>
<evidence type="ECO:0000255" key="1">
    <source>
        <dbReference type="HAMAP-Rule" id="MF_01917"/>
    </source>
</evidence>
<evidence type="ECO:0000256" key="2">
    <source>
        <dbReference type="SAM" id="MobiDB-lite"/>
    </source>
</evidence>
<sequence length="413" mass="47302">MKCGWREGNQIQLLENGDQFYPAVFEAIAQAQQKIILETFILFEDEVGKKLHTALLKAAQRGVKAEVLLDGYGSPDLSDAFVGELTSAGVIFRYYDPRPRLLGLRTNIFRRMHRKIVVIDDRIAFVGGINYSAEHMSDYGPQAKQDYAVRVEGPVVADILQFEVENLPGQSPARRWWKRHHQAEENRHPGEAQALFVWRDNEEHRDDIERHYLKMLTQAKREVIIANAYFFPGYRLLHAMRKAARRGVSVKLIVQGEPDMPIVKVGARLLYNYLVKGGVQVYEYRRRPLHGKVALMDDHWATVGSSNLDPLSLSLNLEANLIIHDRTFNQTLRDNLQGIIVNDCKQVDESMLPKRTWWNLTKSVLAFHFLRHFPALVGWLPAHTPHLAQVPPPAQPEMETQDRVDPENTGVKP</sequence>
<name>CLSB_SALTY</name>
<gene>
    <name evidence="1" type="primary">clsB</name>
    <name type="synonym">ybhO</name>
    <name type="ordered locus">STM0812</name>
</gene>
<keyword id="KW-1003">Cell membrane</keyword>
<keyword id="KW-0444">Lipid biosynthesis</keyword>
<keyword id="KW-0443">Lipid metabolism</keyword>
<keyword id="KW-0472">Membrane</keyword>
<keyword id="KW-0594">Phospholipid biosynthesis</keyword>
<keyword id="KW-1208">Phospholipid metabolism</keyword>
<keyword id="KW-1185">Reference proteome</keyword>
<keyword id="KW-0677">Repeat</keyword>
<keyword id="KW-0808">Transferase</keyword>
<dbReference type="EC" id="2.7.8.-" evidence="1"/>
<dbReference type="EMBL" id="AE006468">
    <property type="protein sequence ID" value="AAL19749.1"/>
    <property type="molecule type" value="Genomic_DNA"/>
</dbReference>
<dbReference type="RefSeq" id="NP_459790.1">
    <property type="nucleotide sequence ID" value="NC_003197.2"/>
</dbReference>
<dbReference type="RefSeq" id="WP_000649648.1">
    <property type="nucleotide sequence ID" value="NC_003197.2"/>
</dbReference>
<dbReference type="SMR" id="Q8ZQP4"/>
<dbReference type="STRING" id="99287.STM0812"/>
<dbReference type="PaxDb" id="99287-STM0812"/>
<dbReference type="GeneID" id="1252332"/>
<dbReference type="KEGG" id="stm:STM0812"/>
<dbReference type="PATRIC" id="fig|99287.12.peg.846"/>
<dbReference type="HOGENOM" id="CLU_038053_0_0_6"/>
<dbReference type="OMA" id="INYSADH"/>
<dbReference type="PhylomeDB" id="Q8ZQP4"/>
<dbReference type="BioCyc" id="SENT99287:STM0812-MONOMER"/>
<dbReference type="PHI-base" id="PHI:123209"/>
<dbReference type="Proteomes" id="UP000001014">
    <property type="component" value="Chromosome"/>
</dbReference>
<dbReference type="GO" id="GO:0016020">
    <property type="term" value="C:membrane"/>
    <property type="evidence" value="ECO:0000318"/>
    <property type="project" value="GO_Central"/>
</dbReference>
<dbReference type="GO" id="GO:0005886">
    <property type="term" value="C:plasma membrane"/>
    <property type="evidence" value="ECO:0007669"/>
    <property type="project" value="UniProtKB-SubCell"/>
</dbReference>
<dbReference type="GO" id="GO:0008808">
    <property type="term" value="F:cardiolipin synthase activity"/>
    <property type="evidence" value="ECO:0000318"/>
    <property type="project" value="GO_Central"/>
</dbReference>
<dbReference type="GO" id="GO:0032049">
    <property type="term" value="P:cardiolipin biosynthetic process"/>
    <property type="evidence" value="ECO:0000318"/>
    <property type="project" value="GO_Central"/>
</dbReference>
<dbReference type="CDD" id="cd09110">
    <property type="entry name" value="PLDc_CLS_1"/>
    <property type="match status" value="1"/>
</dbReference>
<dbReference type="CDD" id="cd09159">
    <property type="entry name" value="PLDc_ybhO_like_2"/>
    <property type="match status" value="1"/>
</dbReference>
<dbReference type="FunFam" id="3.30.870.10:FF:000015">
    <property type="entry name" value="Cardiolipin synthase B"/>
    <property type="match status" value="1"/>
</dbReference>
<dbReference type="FunFam" id="3.30.870.10:FF:000016">
    <property type="entry name" value="Cardiolipin synthase B"/>
    <property type="match status" value="1"/>
</dbReference>
<dbReference type="Gene3D" id="3.30.870.10">
    <property type="entry name" value="Endonuclease Chain A"/>
    <property type="match status" value="2"/>
</dbReference>
<dbReference type="HAMAP" id="MF_01917">
    <property type="entry name" value="Cardiolipin_synth_ClsB"/>
    <property type="match status" value="1"/>
</dbReference>
<dbReference type="InterPro" id="IPR030872">
    <property type="entry name" value="Cardiolipin_synth_ClsB"/>
</dbReference>
<dbReference type="InterPro" id="IPR025202">
    <property type="entry name" value="PLD-like_dom"/>
</dbReference>
<dbReference type="InterPro" id="IPR001736">
    <property type="entry name" value="PLipase_D/transphosphatidylase"/>
</dbReference>
<dbReference type="NCBIfam" id="NF008427">
    <property type="entry name" value="PRK11263.1"/>
    <property type="match status" value="1"/>
</dbReference>
<dbReference type="PANTHER" id="PTHR21248">
    <property type="entry name" value="CARDIOLIPIN SYNTHASE"/>
    <property type="match status" value="1"/>
</dbReference>
<dbReference type="PANTHER" id="PTHR21248:SF23">
    <property type="entry name" value="CARDIOLIPIN SYNTHASE B"/>
    <property type="match status" value="1"/>
</dbReference>
<dbReference type="Pfam" id="PF13091">
    <property type="entry name" value="PLDc_2"/>
    <property type="match status" value="2"/>
</dbReference>
<dbReference type="SMART" id="SM00155">
    <property type="entry name" value="PLDc"/>
    <property type="match status" value="2"/>
</dbReference>
<dbReference type="SUPFAM" id="SSF56024">
    <property type="entry name" value="Phospholipase D/nuclease"/>
    <property type="match status" value="2"/>
</dbReference>
<dbReference type="PROSITE" id="PS50035">
    <property type="entry name" value="PLD"/>
    <property type="match status" value="2"/>
</dbReference>
<comment type="function">
    <text evidence="1">Catalyzes the phosphatidyl group transfer from one phosphatidylglycerol molecule to another to form cardiolipin (CL) (diphosphatidylglycerol) and glycerol.</text>
</comment>
<comment type="catalytic activity">
    <reaction evidence="1">
        <text>2 a 1,2-diacyl-sn-glycero-3-phospho-(1'-sn-glycerol) = a cardiolipin + glycerol</text>
        <dbReference type="Rhea" id="RHEA:31451"/>
        <dbReference type="ChEBI" id="CHEBI:17754"/>
        <dbReference type="ChEBI" id="CHEBI:62237"/>
        <dbReference type="ChEBI" id="CHEBI:64716"/>
    </reaction>
</comment>
<comment type="subcellular location">
    <subcellularLocation>
        <location evidence="1">Cell membrane</location>
        <topology evidence="1">Peripheral membrane protein</topology>
    </subcellularLocation>
</comment>
<comment type="similarity">
    <text evidence="1">Belongs to the phospholipase D family. Cardiolipin synthase subfamily. ClsB sub-subfamily.</text>
</comment>